<keyword id="KW-0927">Auxin signaling pathway</keyword>
<keyword id="KW-1003">Cell membrane</keyword>
<keyword id="KW-0217">Developmental protein</keyword>
<keyword id="KW-0341">Growth regulation</keyword>
<keyword id="KW-0472">Membrane</keyword>
<keyword id="KW-1185">Reference proteome</keyword>
<accession>Q0WPR6</accession>
<accession>Q8LEL8</accession>
<accession>Q9C7Q5</accession>
<evidence type="ECO:0000250" key="1">
    <source>
        <dbReference type="UniProtKB" id="F4I1H5"/>
    </source>
</evidence>
<evidence type="ECO:0000303" key="2">
    <source>
    </source>
</evidence>
<evidence type="ECO:0000305" key="3"/>
<evidence type="ECO:0000312" key="4">
    <source>
        <dbReference type="Araport" id="AT1G29460"/>
    </source>
</evidence>
<evidence type="ECO:0000312" key="5">
    <source>
        <dbReference type="EMBL" id="AAG51750.1"/>
    </source>
</evidence>
<proteinExistence type="evidence at transcript level"/>
<dbReference type="EMBL" id="AC068667">
    <property type="protein sequence ID" value="AAG51750.1"/>
    <property type="status" value="ALT_INIT"/>
    <property type="molecule type" value="Genomic_DNA"/>
</dbReference>
<dbReference type="EMBL" id="CP002684">
    <property type="protein sequence ID" value="AEE31091.1"/>
    <property type="molecule type" value="Genomic_DNA"/>
</dbReference>
<dbReference type="EMBL" id="AK228996">
    <property type="protein sequence ID" value="BAF00883.1"/>
    <property type="molecule type" value="mRNA"/>
</dbReference>
<dbReference type="EMBL" id="BT029320">
    <property type="protein sequence ID" value="ABK32134.1"/>
    <property type="molecule type" value="mRNA"/>
</dbReference>
<dbReference type="EMBL" id="AY085357">
    <property type="protein sequence ID" value="AAM62587.1"/>
    <property type="molecule type" value="mRNA"/>
</dbReference>
<dbReference type="PIR" id="D86417">
    <property type="entry name" value="D86417"/>
</dbReference>
<dbReference type="RefSeq" id="NP_564330.1">
    <property type="nucleotide sequence ID" value="NM_102686.3"/>
</dbReference>
<dbReference type="FunCoup" id="Q0WPR6">
    <property type="interactions" value="87"/>
</dbReference>
<dbReference type="STRING" id="3702.Q0WPR6"/>
<dbReference type="PaxDb" id="3702-AT1G29460.1"/>
<dbReference type="EnsemblPlants" id="AT1G29460.1">
    <property type="protein sequence ID" value="AT1G29460.1"/>
    <property type="gene ID" value="AT1G29460"/>
</dbReference>
<dbReference type="GeneID" id="839822"/>
<dbReference type="Gramene" id="AT1G29460.1">
    <property type="protein sequence ID" value="AT1G29460.1"/>
    <property type="gene ID" value="AT1G29460"/>
</dbReference>
<dbReference type="KEGG" id="ath:AT1G29460"/>
<dbReference type="Araport" id="AT1G29460"/>
<dbReference type="TAIR" id="AT1G29460">
    <property type="gene designation" value="SAUR65"/>
</dbReference>
<dbReference type="eggNOG" id="ENOG502S4GQ">
    <property type="taxonomic scope" value="Eukaryota"/>
</dbReference>
<dbReference type="HOGENOM" id="CLU_090137_1_1_1"/>
<dbReference type="InParanoid" id="Q0WPR6"/>
<dbReference type="OMA" id="IRYLNNC"/>
<dbReference type="PhylomeDB" id="Q0WPR6"/>
<dbReference type="PRO" id="PR:Q0WPR6"/>
<dbReference type="Proteomes" id="UP000006548">
    <property type="component" value="Chromosome 1"/>
</dbReference>
<dbReference type="ExpressionAtlas" id="Q0WPR6">
    <property type="expression patterns" value="baseline and differential"/>
</dbReference>
<dbReference type="GO" id="GO:0005886">
    <property type="term" value="C:plasma membrane"/>
    <property type="evidence" value="ECO:0007669"/>
    <property type="project" value="UniProtKB-SubCell"/>
</dbReference>
<dbReference type="GO" id="GO:0009734">
    <property type="term" value="P:auxin-activated signaling pathway"/>
    <property type="evidence" value="ECO:0007669"/>
    <property type="project" value="UniProtKB-KW"/>
</dbReference>
<dbReference type="InterPro" id="IPR003676">
    <property type="entry name" value="SAUR_fam"/>
</dbReference>
<dbReference type="PANTHER" id="PTHR31175">
    <property type="entry name" value="AUXIN-RESPONSIVE FAMILY PROTEIN"/>
    <property type="match status" value="1"/>
</dbReference>
<dbReference type="PANTHER" id="PTHR31175:SF82">
    <property type="entry name" value="AUXIN-RESPONSIVE PROTEIN SAUR65"/>
    <property type="match status" value="1"/>
</dbReference>
<dbReference type="Pfam" id="PF02519">
    <property type="entry name" value="Auxin_inducible"/>
    <property type="match status" value="1"/>
</dbReference>
<organism>
    <name type="scientific">Arabidopsis thaliana</name>
    <name type="common">Mouse-ear cress</name>
    <dbReference type="NCBI Taxonomy" id="3702"/>
    <lineage>
        <taxon>Eukaryota</taxon>
        <taxon>Viridiplantae</taxon>
        <taxon>Streptophyta</taxon>
        <taxon>Embryophyta</taxon>
        <taxon>Tracheophyta</taxon>
        <taxon>Spermatophyta</taxon>
        <taxon>Magnoliopsida</taxon>
        <taxon>eudicotyledons</taxon>
        <taxon>Gunneridae</taxon>
        <taxon>Pentapetalae</taxon>
        <taxon>rosids</taxon>
        <taxon>malvids</taxon>
        <taxon>Brassicales</taxon>
        <taxon>Brassicaceae</taxon>
        <taxon>Camelineae</taxon>
        <taxon>Arabidopsis</taxon>
    </lineage>
</organism>
<name>SAU65_ARATH</name>
<feature type="chain" id="PRO_0000433077" description="Auxin-responsive protein SAUR65">
    <location>
        <begin position="1"/>
        <end position="148"/>
    </location>
</feature>
<feature type="sequence conflict" description="In Ref. 5; AAM62587." evidence="3" ref="5">
    <original>S</original>
    <variation>STT</variation>
    <location>
        <position position="30"/>
    </location>
</feature>
<comment type="function">
    <text evidence="1">May promote auxin-stimulated organ elongation, such as hypocotyls, stamen filaments and petals.</text>
</comment>
<comment type="subcellular location">
    <subcellularLocation>
        <location evidence="1">Cell membrane</location>
        <topology evidence="1">Peripheral membrane protein</topology>
    </subcellularLocation>
</comment>
<comment type="similarity">
    <text evidence="3">Belongs to the ARG7 family.</text>
</comment>
<comment type="sequence caution" evidence="3">
    <conflict type="erroneous initiation">
        <sequence resource="EMBL-CDS" id="AAG51750"/>
    </conflict>
    <text>Truncated N-terminus.</text>
</comment>
<gene>
    <name evidence="2" type="primary">SAUR65</name>
    <name evidence="4" type="ordered locus">At1g29460</name>
    <name evidence="5" type="ORF">F15D2.35</name>
</gene>
<reference key="1">
    <citation type="journal article" date="2000" name="Nature">
        <title>Sequence and analysis of chromosome 1 of the plant Arabidopsis thaliana.</title>
        <authorList>
            <person name="Theologis A."/>
            <person name="Ecker J.R."/>
            <person name="Palm C.J."/>
            <person name="Federspiel N.A."/>
            <person name="Kaul S."/>
            <person name="White O."/>
            <person name="Alonso J."/>
            <person name="Altafi H."/>
            <person name="Araujo R."/>
            <person name="Bowman C.L."/>
            <person name="Brooks S.Y."/>
            <person name="Buehler E."/>
            <person name="Chan A."/>
            <person name="Chao Q."/>
            <person name="Chen H."/>
            <person name="Cheuk R.F."/>
            <person name="Chin C.W."/>
            <person name="Chung M.K."/>
            <person name="Conn L."/>
            <person name="Conway A.B."/>
            <person name="Conway A.R."/>
            <person name="Creasy T.H."/>
            <person name="Dewar K."/>
            <person name="Dunn P."/>
            <person name="Etgu P."/>
            <person name="Feldblyum T.V."/>
            <person name="Feng J.-D."/>
            <person name="Fong B."/>
            <person name="Fujii C.Y."/>
            <person name="Gill J.E."/>
            <person name="Goldsmith A.D."/>
            <person name="Haas B."/>
            <person name="Hansen N.F."/>
            <person name="Hughes B."/>
            <person name="Huizar L."/>
            <person name="Hunter J.L."/>
            <person name="Jenkins J."/>
            <person name="Johnson-Hopson C."/>
            <person name="Khan S."/>
            <person name="Khaykin E."/>
            <person name="Kim C.J."/>
            <person name="Koo H.L."/>
            <person name="Kremenetskaia I."/>
            <person name="Kurtz D.B."/>
            <person name="Kwan A."/>
            <person name="Lam B."/>
            <person name="Langin-Hooper S."/>
            <person name="Lee A."/>
            <person name="Lee J.M."/>
            <person name="Lenz C.A."/>
            <person name="Li J.H."/>
            <person name="Li Y.-P."/>
            <person name="Lin X."/>
            <person name="Liu S.X."/>
            <person name="Liu Z.A."/>
            <person name="Luros J.S."/>
            <person name="Maiti R."/>
            <person name="Marziali A."/>
            <person name="Militscher J."/>
            <person name="Miranda M."/>
            <person name="Nguyen M."/>
            <person name="Nierman W.C."/>
            <person name="Osborne B.I."/>
            <person name="Pai G."/>
            <person name="Peterson J."/>
            <person name="Pham P.K."/>
            <person name="Rizzo M."/>
            <person name="Rooney T."/>
            <person name="Rowley D."/>
            <person name="Sakano H."/>
            <person name="Salzberg S.L."/>
            <person name="Schwartz J.R."/>
            <person name="Shinn P."/>
            <person name="Southwick A.M."/>
            <person name="Sun H."/>
            <person name="Tallon L.J."/>
            <person name="Tambunga G."/>
            <person name="Toriumi M.J."/>
            <person name="Town C.D."/>
            <person name="Utterback T."/>
            <person name="Van Aken S."/>
            <person name="Vaysberg M."/>
            <person name="Vysotskaia V.S."/>
            <person name="Walker M."/>
            <person name="Wu D."/>
            <person name="Yu G."/>
            <person name="Fraser C.M."/>
            <person name="Venter J.C."/>
            <person name="Davis R.W."/>
        </authorList>
    </citation>
    <scope>NUCLEOTIDE SEQUENCE [LARGE SCALE GENOMIC DNA]</scope>
    <source>
        <strain>cv. Columbia</strain>
    </source>
</reference>
<reference key="2">
    <citation type="journal article" date="2017" name="Plant J.">
        <title>Araport11: a complete reannotation of the Arabidopsis thaliana reference genome.</title>
        <authorList>
            <person name="Cheng C.Y."/>
            <person name="Krishnakumar V."/>
            <person name="Chan A.P."/>
            <person name="Thibaud-Nissen F."/>
            <person name="Schobel S."/>
            <person name="Town C.D."/>
        </authorList>
    </citation>
    <scope>GENOME REANNOTATION</scope>
    <source>
        <strain>cv. Columbia</strain>
    </source>
</reference>
<reference key="3">
    <citation type="submission" date="2006-07" db="EMBL/GenBank/DDBJ databases">
        <title>Large-scale analysis of RIKEN Arabidopsis full-length (RAFL) cDNAs.</title>
        <authorList>
            <person name="Totoki Y."/>
            <person name="Seki M."/>
            <person name="Ishida J."/>
            <person name="Nakajima M."/>
            <person name="Enju A."/>
            <person name="Kamiya A."/>
            <person name="Narusaka M."/>
            <person name="Shin-i T."/>
            <person name="Nakagawa M."/>
            <person name="Sakamoto N."/>
            <person name="Oishi K."/>
            <person name="Kohara Y."/>
            <person name="Kobayashi M."/>
            <person name="Toyoda A."/>
            <person name="Sakaki Y."/>
            <person name="Sakurai T."/>
            <person name="Iida K."/>
            <person name="Akiyama K."/>
            <person name="Satou M."/>
            <person name="Toyoda T."/>
            <person name="Konagaya A."/>
            <person name="Carninci P."/>
            <person name="Kawai J."/>
            <person name="Hayashizaki Y."/>
            <person name="Shinozaki K."/>
        </authorList>
    </citation>
    <scope>NUCLEOTIDE SEQUENCE [LARGE SCALE MRNA]</scope>
    <source>
        <strain>cv. Columbia</strain>
    </source>
</reference>
<reference key="4">
    <citation type="submission" date="2006-11" db="EMBL/GenBank/DDBJ databases">
        <title>Arabidopsis ORF Clones.</title>
        <authorList>
            <person name="Bautista V.R."/>
            <person name="Kim C.J."/>
            <person name="Chen H."/>
            <person name="Quinitio C."/>
            <person name="Ecker J.R."/>
        </authorList>
    </citation>
    <scope>NUCLEOTIDE SEQUENCE [LARGE SCALE MRNA]</scope>
    <source>
        <strain>cv. Columbia</strain>
    </source>
</reference>
<reference key="5">
    <citation type="submission" date="2002-03" db="EMBL/GenBank/DDBJ databases">
        <title>Full-length cDNA from Arabidopsis thaliana.</title>
        <authorList>
            <person name="Brover V.V."/>
            <person name="Troukhan M.E."/>
            <person name="Alexandrov N.A."/>
            <person name="Lu Y.-P."/>
            <person name="Flavell R.B."/>
            <person name="Feldmann K.A."/>
        </authorList>
    </citation>
    <scope>NUCLEOTIDE SEQUENCE [LARGE SCALE MRNA]</scope>
</reference>
<reference key="6">
    <citation type="journal article" date="2002" name="Plant Mol. Biol.">
        <title>Auxin-responsive gene expression: genes, promoters and regulatory factors.</title>
        <authorList>
            <person name="Hagen G."/>
            <person name="Guilfoyle T.J."/>
        </authorList>
    </citation>
    <scope>GENE FAMILY</scope>
    <scope>NOMENCLATURE</scope>
</reference>
<protein>
    <recommendedName>
        <fullName evidence="3">Auxin-responsive protein SAUR65</fullName>
    </recommendedName>
    <alternativeName>
        <fullName evidence="2">Protein SMALL AUXIN UP RNA 65</fullName>
    </alternativeName>
</protein>
<sequence>MINTKKLLKMAKKWQQRAALKRKRISFQRSTTTTTTTTTTTSSSTAVEKGCFVVYTVDKIRFAFPLSYLNNSVFEELLKISEEEFGLRAGGPITLPFDSVFLEYLIKFIERRMDGDTEKALLMSISSARCSMQPQEQQSGYTQQLLVF</sequence>